<accession>D3ZHH1</accession>
<comment type="function">
    <text evidence="1 2 7">Involved in the Notch signaling pathway as Notch ligand. Activates NOTCH1 and NOTCH4 (PubMed:25700513). Involved in angiogenesis; negatively regulates endothelial cell proliferation and migration and angiogenic sprouting. Essential for retinal progenitor proliferation. Required for suppressing rod fates in late retinal progenitors as well as for proper generation of other retinal cell types. During spinal cord neurogenesis, inhibits V2a interneuron fate (By similarity).</text>
</comment>
<comment type="subunit">
    <text evidence="1 7">Interacts with NOTCH4 (By similarity). Interacts (via N-terminal DSL and MNNL domains) with NOTCH1 (via EGF-like domains) (PubMed:25700513).</text>
</comment>
<comment type="subcellular location">
    <subcellularLocation>
        <location evidence="10">Cell membrane</location>
        <topology evidence="6">Single-pass type I membrane protein</topology>
    </subcellularLocation>
</comment>
<reference key="1">
    <citation type="journal article" date="2004" name="Nature">
        <title>Genome sequence of the Brown Norway rat yields insights into mammalian evolution.</title>
        <authorList>
            <person name="Gibbs R.A."/>
            <person name="Weinstock G.M."/>
            <person name="Metzker M.L."/>
            <person name="Muzny D.M."/>
            <person name="Sodergren E.J."/>
            <person name="Scherer S."/>
            <person name="Scott G."/>
            <person name="Steffen D."/>
            <person name="Worley K.C."/>
            <person name="Burch P.E."/>
            <person name="Okwuonu G."/>
            <person name="Hines S."/>
            <person name="Lewis L."/>
            <person name="Deramo C."/>
            <person name="Delgado O."/>
            <person name="Dugan-Rocha S."/>
            <person name="Miner G."/>
            <person name="Morgan M."/>
            <person name="Hawes A."/>
            <person name="Gill R."/>
            <person name="Holt R.A."/>
            <person name="Adams M.D."/>
            <person name="Amanatides P.G."/>
            <person name="Baden-Tillson H."/>
            <person name="Barnstead M."/>
            <person name="Chin S."/>
            <person name="Evans C.A."/>
            <person name="Ferriera S."/>
            <person name="Fosler C."/>
            <person name="Glodek A."/>
            <person name="Gu Z."/>
            <person name="Jennings D."/>
            <person name="Kraft C.L."/>
            <person name="Nguyen T."/>
            <person name="Pfannkoch C.M."/>
            <person name="Sitter C."/>
            <person name="Sutton G.G."/>
            <person name="Venter J.C."/>
            <person name="Woodage T."/>
            <person name="Smith D."/>
            <person name="Lee H.-M."/>
            <person name="Gustafson E."/>
            <person name="Cahill P."/>
            <person name="Kana A."/>
            <person name="Doucette-Stamm L."/>
            <person name="Weinstock K."/>
            <person name="Fechtel K."/>
            <person name="Weiss R.B."/>
            <person name="Dunn D.M."/>
            <person name="Green E.D."/>
            <person name="Blakesley R.W."/>
            <person name="Bouffard G.G."/>
            <person name="De Jong P.J."/>
            <person name="Osoegawa K."/>
            <person name="Zhu B."/>
            <person name="Marra M."/>
            <person name="Schein J."/>
            <person name="Bosdet I."/>
            <person name="Fjell C."/>
            <person name="Jones S."/>
            <person name="Krzywinski M."/>
            <person name="Mathewson C."/>
            <person name="Siddiqui A."/>
            <person name="Wye N."/>
            <person name="McPherson J."/>
            <person name="Zhao S."/>
            <person name="Fraser C.M."/>
            <person name="Shetty J."/>
            <person name="Shatsman S."/>
            <person name="Geer K."/>
            <person name="Chen Y."/>
            <person name="Abramzon S."/>
            <person name="Nierman W.C."/>
            <person name="Havlak P.H."/>
            <person name="Chen R."/>
            <person name="Durbin K.J."/>
            <person name="Egan A."/>
            <person name="Ren Y."/>
            <person name="Song X.-Z."/>
            <person name="Li B."/>
            <person name="Liu Y."/>
            <person name="Qin X."/>
            <person name="Cawley S."/>
            <person name="Cooney A.J."/>
            <person name="D'Souza L.M."/>
            <person name="Martin K."/>
            <person name="Wu J.Q."/>
            <person name="Gonzalez-Garay M.L."/>
            <person name="Jackson A.R."/>
            <person name="Kalafus K.J."/>
            <person name="McLeod M.P."/>
            <person name="Milosavljevic A."/>
            <person name="Virk D."/>
            <person name="Volkov A."/>
            <person name="Wheeler D.A."/>
            <person name="Zhang Z."/>
            <person name="Bailey J.A."/>
            <person name="Eichler E.E."/>
            <person name="Tuzun E."/>
            <person name="Birney E."/>
            <person name="Mongin E."/>
            <person name="Ureta-Vidal A."/>
            <person name="Woodwark C."/>
            <person name="Zdobnov E."/>
            <person name="Bork P."/>
            <person name="Suyama M."/>
            <person name="Torrents D."/>
            <person name="Alexandersson M."/>
            <person name="Trask B.J."/>
            <person name="Young J.M."/>
            <person name="Huang H."/>
            <person name="Wang H."/>
            <person name="Xing H."/>
            <person name="Daniels S."/>
            <person name="Gietzen D."/>
            <person name="Schmidt J."/>
            <person name="Stevens K."/>
            <person name="Vitt U."/>
            <person name="Wingrove J."/>
            <person name="Camara F."/>
            <person name="Mar Alba M."/>
            <person name="Abril J.F."/>
            <person name="Guigo R."/>
            <person name="Smit A."/>
            <person name="Dubchak I."/>
            <person name="Rubin E.M."/>
            <person name="Couronne O."/>
            <person name="Poliakov A."/>
            <person name="Huebner N."/>
            <person name="Ganten D."/>
            <person name="Goesele C."/>
            <person name="Hummel O."/>
            <person name="Kreitler T."/>
            <person name="Lee Y.-A."/>
            <person name="Monti J."/>
            <person name="Schulz H."/>
            <person name="Zimdahl H."/>
            <person name="Himmelbauer H."/>
            <person name="Lehrach H."/>
            <person name="Jacob H.J."/>
            <person name="Bromberg S."/>
            <person name="Gullings-Handley J."/>
            <person name="Jensen-Seaman M.I."/>
            <person name="Kwitek A.E."/>
            <person name="Lazar J."/>
            <person name="Pasko D."/>
            <person name="Tonellato P.J."/>
            <person name="Twigger S."/>
            <person name="Ponting C.P."/>
            <person name="Duarte J.M."/>
            <person name="Rice S."/>
            <person name="Goodstadt L."/>
            <person name="Beatson S.A."/>
            <person name="Emes R.D."/>
            <person name="Winter E.E."/>
            <person name="Webber C."/>
            <person name="Brandt P."/>
            <person name="Nyakatura G."/>
            <person name="Adetobi M."/>
            <person name="Chiaromonte F."/>
            <person name="Elnitski L."/>
            <person name="Eswara P."/>
            <person name="Hardison R.C."/>
            <person name="Hou M."/>
            <person name="Kolbe D."/>
            <person name="Makova K."/>
            <person name="Miller W."/>
            <person name="Nekrutenko A."/>
            <person name="Riemer C."/>
            <person name="Schwartz S."/>
            <person name="Taylor J."/>
            <person name="Yang S."/>
            <person name="Zhang Y."/>
            <person name="Lindpaintner K."/>
            <person name="Andrews T.D."/>
            <person name="Caccamo M."/>
            <person name="Clamp M."/>
            <person name="Clarke L."/>
            <person name="Curwen V."/>
            <person name="Durbin R.M."/>
            <person name="Eyras E."/>
            <person name="Searle S.M."/>
            <person name="Cooper G.M."/>
            <person name="Batzoglou S."/>
            <person name="Brudno M."/>
            <person name="Sidow A."/>
            <person name="Stone E.A."/>
            <person name="Payseur B.A."/>
            <person name="Bourque G."/>
            <person name="Lopez-Otin C."/>
            <person name="Puente X.S."/>
            <person name="Chakrabarti K."/>
            <person name="Chatterji S."/>
            <person name="Dewey C."/>
            <person name="Pachter L."/>
            <person name="Bray N."/>
            <person name="Yap V.B."/>
            <person name="Caspi A."/>
            <person name="Tesler G."/>
            <person name="Pevzner P.A."/>
            <person name="Haussler D."/>
            <person name="Roskin K.M."/>
            <person name="Baertsch R."/>
            <person name="Clawson H."/>
            <person name="Furey T.S."/>
            <person name="Hinrichs A.S."/>
            <person name="Karolchik D."/>
            <person name="Kent W.J."/>
            <person name="Rosenbloom K.R."/>
            <person name="Trumbower H."/>
            <person name="Weirauch M."/>
            <person name="Cooper D.N."/>
            <person name="Stenson P.D."/>
            <person name="Ma B."/>
            <person name="Brent M."/>
            <person name="Arumugam M."/>
            <person name="Shteynberg D."/>
            <person name="Copley R.R."/>
            <person name="Taylor M.S."/>
            <person name="Riethman H."/>
            <person name="Mudunuri U."/>
            <person name="Peterson J."/>
            <person name="Guyer M."/>
            <person name="Felsenfeld A."/>
            <person name="Old S."/>
            <person name="Mockrin S."/>
            <person name="Collins F.S."/>
        </authorList>
    </citation>
    <scope>NUCLEOTIDE SEQUENCE [LARGE SCALE GENOMIC DNA]</scope>
    <source>
        <strain>Brown Norway</strain>
    </source>
</reference>
<reference evidence="12 13" key="2">
    <citation type="journal article" date="2015" name="Science">
        <title>Structural biology. Structural basis for Notch1 engagement of Delta-like 4.</title>
        <authorList>
            <person name="Luca V.C."/>
            <person name="Jude K.M."/>
            <person name="Pierce N.W."/>
            <person name="Nachury M.V."/>
            <person name="Fischer S."/>
            <person name="Garcia K.C."/>
        </authorList>
    </citation>
    <scope>X-RAY CRYSTALLOGRAPHY (2.30 ANGSTROMS) OF 28-284 OF SER-29/LEU-108/PRO-207 MUTANT IN COMPLEX WITH NOTCH1</scope>
    <scope>FUNCTION</scope>
    <scope>GLYCOSYLATION AT ASN-79; ASN-109 AND ASN-162</scope>
    <scope>DISULFIDE BONDS</scope>
    <scope>MUTAGENESIS OF HIS-65; TYR-66; PHE-196 AND TYR-217</scope>
</reference>
<organism>
    <name type="scientific">Rattus norvegicus</name>
    <name type="common">Rat</name>
    <dbReference type="NCBI Taxonomy" id="10116"/>
    <lineage>
        <taxon>Eukaryota</taxon>
        <taxon>Metazoa</taxon>
        <taxon>Chordata</taxon>
        <taxon>Craniata</taxon>
        <taxon>Vertebrata</taxon>
        <taxon>Euteleostomi</taxon>
        <taxon>Mammalia</taxon>
        <taxon>Eutheria</taxon>
        <taxon>Euarchontoglires</taxon>
        <taxon>Glires</taxon>
        <taxon>Rodentia</taxon>
        <taxon>Myomorpha</taxon>
        <taxon>Muroidea</taxon>
        <taxon>Muridae</taxon>
        <taxon>Murinae</taxon>
        <taxon>Rattus</taxon>
    </lineage>
</organism>
<sequence>MTPGSRSACRWALLLLAVLWPQQRAAGSGIFQLRLQEFANERGMLANGRPCEPGCRTFFRICLKHYQATFSEGPCTFGNVSTPVLGTNSFVIRDKNSGSGRNPLQLPFNFTWPGTFSLNIQAWHTPGDDLRPETSPGNSLISQIIIQGSLAVGKNWKSDEQNNTLTRLRYSYRVVCSDNYYGDSCSRLCKKRDDHFGHYECQPDGSLSCLPGWTGKYCDQPICLSGCHEQNGYCSKPDECNCRPGWQGPLCNECIPHNGCRHGTCTIPWQCACDEGWGGLFCDQDLNYCTHHSPCKNGSTCSNSGPRGYTCTCLPGYTGEHCELELSKCASNPCRNGGSCKDHENSYHCLCPPGYYGQHCEHSTLTCADSPCFNGGSCRERNQGASYACECPPNFTGSNCEKKVDRCTSNPCANGGQCLNRGPSRTCRCRPGFTGTHCELHISDCARSPCAHGGTCHDLENGPVCTCPAGFSGRRCEVRITNDACASGPCFNGATCYTGLSPNNFVCNCPYGFVGSRCEFPVGLPPSFPWVAVSLGVGLVVLLVLLVMVAVAVRQLRLRRPDDDSREAMNNLSDFQKDNLIPAAQLKNTNQKKELEVDCGLDKSNCGKLQNHTLDYNLAPGFLGRGSTPGKYPHSDKSLGEKVPLRLHSEKPACRISAICSPRDSMYQSVCLISEERNECVIATEV</sequence>
<evidence type="ECO:0000250" key="1">
    <source>
        <dbReference type="UniProtKB" id="Q9JI71"/>
    </source>
</evidence>
<evidence type="ECO:0000250" key="2">
    <source>
        <dbReference type="UniProtKB" id="Q9NR61"/>
    </source>
</evidence>
<evidence type="ECO:0000255" key="3"/>
<evidence type="ECO:0000255" key="4">
    <source>
        <dbReference type="PROSITE-ProRule" id="PRU00076"/>
    </source>
</evidence>
<evidence type="ECO:0000255" key="5">
    <source>
        <dbReference type="PROSITE-ProRule" id="PRU00377"/>
    </source>
</evidence>
<evidence type="ECO:0000255" key="6">
    <source>
        <dbReference type="RuleBase" id="RU280815"/>
    </source>
</evidence>
<evidence type="ECO:0000269" key="7">
    <source>
    </source>
</evidence>
<evidence type="ECO:0000303" key="8">
    <source>
    </source>
</evidence>
<evidence type="ECO:0000305" key="9"/>
<evidence type="ECO:0000305" key="10">
    <source>
    </source>
</evidence>
<evidence type="ECO:0000312" key="11">
    <source>
        <dbReference type="RGD" id="1309740"/>
    </source>
</evidence>
<evidence type="ECO:0007744" key="12">
    <source>
        <dbReference type="PDB" id="4XL1"/>
    </source>
</evidence>
<evidence type="ECO:0007744" key="13">
    <source>
        <dbReference type="PDB" id="4XLW"/>
    </source>
</evidence>
<evidence type="ECO:0007829" key="14">
    <source>
        <dbReference type="PDB" id="4XL1"/>
    </source>
</evidence>
<evidence type="ECO:0007829" key="15">
    <source>
        <dbReference type="PDB" id="4XLW"/>
    </source>
</evidence>
<proteinExistence type="evidence at protein level"/>
<keyword id="KW-0002">3D-structure</keyword>
<keyword id="KW-1003">Cell membrane</keyword>
<keyword id="KW-0217">Developmental protein</keyword>
<keyword id="KW-1015">Disulfide bond</keyword>
<keyword id="KW-0245">EGF-like domain</keyword>
<keyword id="KW-0325">Glycoprotein</keyword>
<keyword id="KW-0472">Membrane</keyword>
<keyword id="KW-1185">Reference proteome</keyword>
<keyword id="KW-0677">Repeat</keyword>
<keyword id="KW-0732">Signal</keyword>
<keyword id="KW-0812">Transmembrane</keyword>
<keyword id="KW-1133">Transmembrane helix</keyword>
<protein>
    <recommendedName>
        <fullName evidence="8">Delta-like protein 4</fullName>
    </recommendedName>
    <alternativeName>
        <fullName evidence="9">Drosophila Delta homolog 4</fullName>
        <shortName evidence="9">Delta4</shortName>
    </alternativeName>
</protein>
<gene>
    <name evidence="11" type="primary">Dll4</name>
</gene>
<feature type="signal peptide" evidence="3">
    <location>
        <begin position="1"/>
        <end position="27"/>
    </location>
</feature>
<feature type="chain" id="PRO_5003053341" description="Delta-like protein 4">
    <location>
        <begin position="28"/>
        <end position="686"/>
    </location>
</feature>
<feature type="topological domain" description="Extracellular" evidence="9">
    <location>
        <begin position="28"/>
        <end position="530"/>
    </location>
</feature>
<feature type="transmembrane region" description="Helical" evidence="3">
    <location>
        <begin position="531"/>
        <end position="551"/>
    </location>
</feature>
<feature type="topological domain" description="Cytoplasmic" evidence="9">
    <location>
        <begin position="552"/>
        <end position="686"/>
    </location>
</feature>
<feature type="domain" description="DSL" evidence="5">
    <location>
        <begin position="174"/>
        <end position="218"/>
    </location>
</feature>
<feature type="domain" description="EGF-like 1" evidence="4">
    <location>
        <begin position="219"/>
        <end position="252"/>
    </location>
</feature>
<feature type="domain" description="EGF-like 2" evidence="4">
    <location>
        <begin position="256"/>
        <end position="283"/>
    </location>
</feature>
<feature type="domain" description="EGF-like 3" evidence="4">
    <location>
        <begin position="285"/>
        <end position="323"/>
    </location>
</feature>
<feature type="domain" description="EGF-like 4" evidence="4">
    <location>
        <begin position="325"/>
        <end position="361"/>
    </location>
</feature>
<feature type="domain" description="EGF-like 5" evidence="4">
    <location>
        <begin position="363"/>
        <end position="401"/>
    </location>
</feature>
<feature type="domain" description="EGF-like 6" evidence="4">
    <location>
        <begin position="403"/>
        <end position="439"/>
    </location>
</feature>
<feature type="domain" description="EGF-like 7" evidence="4">
    <location>
        <begin position="441"/>
        <end position="477"/>
    </location>
</feature>
<feature type="domain" description="EGF-like 8" evidence="4">
    <location>
        <begin position="481"/>
        <end position="519"/>
    </location>
</feature>
<feature type="region of interest" description="Interaction with Notch1" evidence="7">
    <location>
        <begin position="186"/>
        <end position="188"/>
    </location>
</feature>
<feature type="region of interest" description="Interaction with Notch1" evidence="7">
    <location>
        <begin position="192"/>
        <end position="196"/>
    </location>
</feature>
<feature type="site" description="Interaction with Notch1" evidence="7">
    <location>
        <position position="111"/>
    </location>
</feature>
<feature type="site" description="Interaction with Notch1" evidence="7">
    <location>
        <position position="217"/>
    </location>
</feature>
<feature type="glycosylation site" description="N-linked (GlcNAc...) asparagine" evidence="7 12">
    <location>
        <position position="79"/>
    </location>
</feature>
<feature type="glycosylation site" description="N-linked (GlcNAc...) asparagine" evidence="7 12">
    <location>
        <position position="109"/>
    </location>
</feature>
<feature type="glycosylation site" description="N-linked (GlcNAc...) asparagine" evidence="7 12">
    <location>
        <position position="162"/>
    </location>
</feature>
<feature type="disulfide bond" evidence="7 12 13">
    <location>
        <begin position="51"/>
        <end position="55"/>
    </location>
</feature>
<feature type="disulfide bond" evidence="7 12 13">
    <location>
        <begin position="62"/>
        <end position="75"/>
    </location>
</feature>
<feature type="disulfide bond" evidence="5 7 12 13">
    <location>
        <begin position="176"/>
        <end position="185"/>
    </location>
</feature>
<feature type="disulfide bond" evidence="5 7 12 13">
    <location>
        <begin position="189"/>
        <end position="201"/>
    </location>
</feature>
<feature type="disulfide bond" evidence="5 7 12 13">
    <location>
        <begin position="209"/>
        <end position="218"/>
    </location>
</feature>
<feature type="disulfide bond" evidence="4 7 12 13">
    <location>
        <begin position="223"/>
        <end position="234"/>
    </location>
</feature>
<feature type="disulfide bond" evidence="4 7 12 13">
    <location>
        <begin position="227"/>
        <end position="240"/>
    </location>
</feature>
<feature type="disulfide bond" evidence="4 7 12 13">
    <location>
        <begin position="242"/>
        <end position="251"/>
    </location>
</feature>
<feature type="disulfide bond" evidence="7 13">
    <location>
        <begin position="254"/>
        <end position="265"/>
    </location>
</feature>
<feature type="disulfide bond" evidence="7 13">
    <location>
        <begin position="260"/>
        <end position="271"/>
    </location>
</feature>
<feature type="disulfide bond" evidence="4 7 13">
    <location>
        <begin position="273"/>
        <end position="282"/>
    </location>
</feature>
<feature type="disulfide bond" evidence="4">
    <location>
        <begin position="289"/>
        <end position="301"/>
    </location>
</feature>
<feature type="disulfide bond" evidence="4">
    <location>
        <begin position="295"/>
        <end position="311"/>
    </location>
</feature>
<feature type="disulfide bond" evidence="4">
    <location>
        <begin position="313"/>
        <end position="322"/>
    </location>
</feature>
<feature type="disulfide bond" evidence="4">
    <location>
        <begin position="329"/>
        <end position="340"/>
    </location>
</feature>
<feature type="disulfide bond" evidence="4">
    <location>
        <begin position="334"/>
        <end position="349"/>
    </location>
</feature>
<feature type="disulfide bond" evidence="4">
    <location>
        <begin position="351"/>
        <end position="360"/>
    </location>
</feature>
<feature type="disulfide bond" evidence="4">
    <location>
        <begin position="367"/>
        <end position="378"/>
    </location>
</feature>
<feature type="disulfide bond" evidence="4">
    <location>
        <begin position="372"/>
        <end position="389"/>
    </location>
</feature>
<feature type="disulfide bond" evidence="4">
    <location>
        <begin position="391"/>
        <end position="400"/>
    </location>
</feature>
<feature type="disulfide bond" evidence="4">
    <location>
        <begin position="407"/>
        <end position="418"/>
    </location>
</feature>
<feature type="disulfide bond" evidence="4">
    <location>
        <begin position="412"/>
        <end position="427"/>
    </location>
</feature>
<feature type="disulfide bond" evidence="4">
    <location>
        <begin position="429"/>
        <end position="438"/>
    </location>
</feature>
<feature type="disulfide bond" evidence="4">
    <location>
        <begin position="445"/>
        <end position="456"/>
    </location>
</feature>
<feature type="disulfide bond" evidence="4">
    <location>
        <begin position="450"/>
        <end position="465"/>
    </location>
</feature>
<feature type="disulfide bond" evidence="4">
    <location>
        <begin position="467"/>
        <end position="476"/>
    </location>
</feature>
<feature type="disulfide bond" evidence="4">
    <location>
        <begin position="485"/>
        <end position="496"/>
    </location>
</feature>
<feature type="disulfide bond" evidence="4">
    <location>
        <begin position="490"/>
        <end position="507"/>
    </location>
</feature>
<feature type="disulfide bond" evidence="4">
    <location>
        <begin position="509"/>
        <end position="518"/>
    </location>
</feature>
<feature type="mutagenesis site" description="Strongly decreased binding to Notch1." evidence="7">
    <original>H</original>
    <variation>A</variation>
    <location>
        <position position="65"/>
    </location>
</feature>
<feature type="mutagenesis site" description="Decreased binding to Notch1." evidence="7">
    <original>Y</original>
    <variation>A</variation>
    <location>
        <position position="66"/>
    </location>
</feature>
<feature type="mutagenesis site" description="Strongly decreased binding to Notch1." evidence="7">
    <original>F</original>
    <variation>A</variation>
    <location>
        <position position="196"/>
    </location>
</feature>
<feature type="mutagenesis site" description="No binding to Notch1." evidence="7">
    <original>Y</original>
    <variation>A</variation>
    <location>
        <position position="217"/>
    </location>
</feature>
<feature type="strand" evidence="14">
    <location>
        <begin position="29"/>
        <end position="39"/>
    </location>
</feature>
<feature type="strand" evidence="14">
    <location>
        <begin position="52"/>
        <end position="54"/>
    </location>
</feature>
<feature type="strand" evidence="14">
    <location>
        <begin position="56"/>
        <end position="64"/>
    </location>
</feature>
<feature type="strand" evidence="15">
    <location>
        <begin position="68"/>
        <end position="70"/>
    </location>
</feature>
<feature type="strand" evidence="14">
    <location>
        <begin position="78"/>
        <end position="81"/>
    </location>
</feature>
<feature type="strand" evidence="14">
    <location>
        <begin position="86"/>
        <end position="91"/>
    </location>
</feature>
<feature type="strand" evidence="14">
    <location>
        <begin position="102"/>
        <end position="110"/>
    </location>
</feature>
<feature type="strand" evidence="14">
    <location>
        <begin position="114"/>
        <end position="124"/>
    </location>
</feature>
<feature type="strand" evidence="14">
    <location>
        <begin position="129"/>
        <end position="131"/>
    </location>
</feature>
<feature type="helix" evidence="14">
    <location>
        <begin position="132"/>
        <end position="134"/>
    </location>
</feature>
<feature type="strand" evidence="14">
    <location>
        <begin position="139"/>
        <end position="149"/>
    </location>
</feature>
<feature type="strand" evidence="14">
    <location>
        <begin position="157"/>
        <end position="165"/>
    </location>
</feature>
<feature type="strand" evidence="14">
    <location>
        <begin position="167"/>
        <end position="176"/>
    </location>
</feature>
<feature type="strand" evidence="14">
    <location>
        <begin position="180"/>
        <end position="182"/>
    </location>
</feature>
<feature type="strand" evidence="14">
    <location>
        <begin position="197"/>
        <end position="201"/>
    </location>
</feature>
<feature type="strand" evidence="14">
    <location>
        <begin position="207"/>
        <end position="209"/>
    </location>
</feature>
<feature type="turn" evidence="14">
    <location>
        <begin position="229"/>
        <end position="231"/>
    </location>
</feature>
<feature type="turn" evidence="14">
    <location>
        <begin position="248"/>
        <end position="251"/>
    </location>
</feature>
<feature type="strand" evidence="15">
    <location>
        <begin position="261"/>
        <end position="264"/>
    </location>
</feature>
<feature type="strand" evidence="15">
    <location>
        <begin position="266"/>
        <end position="269"/>
    </location>
</feature>
<feature type="turn" evidence="15">
    <location>
        <begin position="279"/>
        <end position="282"/>
    </location>
</feature>
<dbReference type="EMBL" id="AC132987">
    <property type="status" value="NOT_ANNOTATED_CDS"/>
    <property type="molecule type" value="Genomic_DNA"/>
</dbReference>
<dbReference type="RefSeq" id="NP_001418638.1">
    <property type="nucleotide sequence ID" value="NM_001431709.1"/>
</dbReference>
<dbReference type="RefSeq" id="XP_006234827.1">
    <property type="nucleotide sequence ID" value="XM_006234765.2"/>
</dbReference>
<dbReference type="PDB" id="4XL1">
    <property type="method" value="X-ray"/>
    <property type="resolution" value="2.30 A"/>
    <property type="chains" value="B/E=28-253"/>
</dbReference>
<dbReference type="PDB" id="4XLW">
    <property type="method" value="X-ray"/>
    <property type="resolution" value="3.39 A"/>
    <property type="chains" value="B/D/F/H=28-284"/>
</dbReference>
<dbReference type="PDBsum" id="4XL1"/>
<dbReference type="PDBsum" id="4XLW"/>
<dbReference type="SMR" id="D3ZHH1"/>
<dbReference type="FunCoup" id="D3ZHH1">
    <property type="interactions" value="318"/>
</dbReference>
<dbReference type="IntAct" id="D3ZHH1">
    <property type="interactions" value="2"/>
</dbReference>
<dbReference type="STRING" id="10116.ENSRNOP00000018970"/>
<dbReference type="GlyCosmos" id="D3ZHH1">
    <property type="glycosylation" value="3 sites, No reported glycans"/>
</dbReference>
<dbReference type="GlyGen" id="D3ZHH1">
    <property type="glycosylation" value="4 sites"/>
</dbReference>
<dbReference type="iPTMnet" id="D3ZHH1"/>
<dbReference type="PhosphoSitePlus" id="D3ZHH1"/>
<dbReference type="PaxDb" id="10116-ENSRNOP00000018970"/>
<dbReference type="Ensembl" id="ENSRNOT00000117478.1">
    <property type="protein sequence ID" value="ENSRNOP00000091766.1"/>
    <property type="gene ID" value="ENSRNOG00000014011.8"/>
</dbReference>
<dbReference type="GeneID" id="311332"/>
<dbReference type="UCSC" id="RGD:1309740">
    <property type="organism name" value="rat"/>
</dbReference>
<dbReference type="AGR" id="RGD:1309740"/>
<dbReference type="CTD" id="54567"/>
<dbReference type="RGD" id="1309740">
    <property type="gene designation" value="Dll4"/>
</dbReference>
<dbReference type="eggNOG" id="KOG1217">
    <property type="taxonomic scope" value="Eukaryota"/>
</dbReference>
<dbReference type="GeneTree" id="ENSGT00940000157441"/>
<dbReference type="HOGENOM" id="CLU_012574_1_0_1"/>
<dbReference type="InParanoid" id="D3ZHH1"/>
<dbReference type="OrthoDB" id="1198at9989"/>
<dbReference type="PhylomeDB" id="D3ZHH1"/>
<dbReference type="TreeFam" id="TF351835"/>
<dbReference type="Reactome" id="R-RNO-2979096">
    <property type="pathway name" value="NOTCH2 Activation and Transmission of Signal to the Nucleus"/>
</dbReference>
<dbReference type="Reactome" id="R-RNO-9013507">
    <property type="pathway name" value="NOTCH3 Activation and Transmission of Signal to the Nucleus"/>
</dbReference>
<dbReference type="EvolutionaryTrace" id="D3ZHH1"/>
<dbReference type="PRO" id="PR:D3ZHH1"/>
<dbReference type="Proteomes" id="UP000002494">
    <property type="component" value="Chromosome 3"/>
</dbReference>
<dbReference type="Bgee" id="ENSRNOG00000014011">
    <property type="expression patterns" value="Expressed in lung and 18 other cell types or tissues"/>
</dbReference>
<dbReference type="GO" id="GO:0005886">
    <property type="term" value="C:plasma membrane"/>
    <property type="evidence" value="ECO:0000318"/>
    <property type="project" value="GO_Central"/>
</dbReference>
<dbReference type="GO" id="GO:0005509">
    <property type="term" value="F:calcium ion binding"/>
    <property type="evidence" value="ECO:0007669"/>
    <property type="project" value="InterPro"/>
</dbReference>
<dbReference type="GO" id="GO:0005112">
    <property type="term" value="F:Notch binding"/>
    <property type="evidence" value="ECO:0000266"/>
    <property type="project" value="RGD"/>
</dbReference>
<dbReference type="GO" id="GO:0048018">
    <property type="term" value="F:receptor ligand activity"/>
    <property type="evidence" value="ECO:0000266"/>
    <property type="project" value="RGD"/>
</dbReference>
<dbReference type="GO" id="GO:0001525">
    <property type="term" value="P:angiogenesis"/>
    <property type="evidence" value="ECO:0000266"/>
    <property type="project" value="RGD"/>
</dbReference>
<dbReference type="GO" id="GO:0003180">
    <property type="term" value="P:aortic valve morphogenesis"/>
    <property type="evidence" value="ECO:0000266"/>
    <property type="project" value="RGD"/>
</dbReference>
<dbReference type="GO" id="GO:0072554">
    <property type="term" value="P:blood vessel lumenization"/>
    <property type="evidence" value="ECO:0000266"/>
    <property type="project" value="RGD"/>
</dbReference>
<dbReference type="GO" id="GO:0001974">
    <property type="term" value="P:blood vessel remodeling"/>
    <property type="evidence" value="ECO:0000266"/>
    <property type="project" value="RGD"/>
</dbReference>
<dbReference type="GO" id="GO:0001569">
    <property type="term" value="P:branching involved in blood vessel morphogenesis"/>
    <property type="evidence" value="ECO:0000266"/>
    <property type="project" value="RGD"/>
</dbReference>
<dbReference type="GO" id="GO:0003209">
    <property type="term" value="P:cardiac atrium morphogenesis"/>
    <property type="evidence" value="ECO:0000266"/>
    <property type="project" value="RGD"/>
</dbReference>
<dbReference type="GO" id="GO:0003208">
    <property type="term" value="P:cardiac ventricle morphogenesis"/>
    <property type="evidence" value="ECO:0000266"/>
    <property type="project" value="RGD"/>
</dbReference>
<dbReference type="GO" id="GO:0071397">
    <property type="term" value="P:cellular response to cholesterol"/>
    <property type="evidence" value="ECO:0000270"/>
    <property type="project" value="RGD"/>
</dbReference>
<dbReference type="GO" id="GO:0044344">
    <property type="term" value="P:cellular response to fibroblast growth factor stimulus"/>
    <property type="evidence" value="ECO:0000266"/>
    <property type="project" value="RGD"/>
</dbReference>
<dbReference type="GO" id="GO:0071456">
    <property type="term" value="P:cellular response to hypoxia"/>
    <property type="evidence" value="ECO:0000270"/>
    <property type="project" value="RGD"/>
</dbReference>
<dbReference type="GO" id="GO:0035924">
    <property type="term" value="P:cellular response to vascular endothelial growth factor stimulus"/>
    <property type="evidence" value="ECO:0000266"/>
    <property type="project" value="RGD"/>
</dbReference>
<dbReference type="GO" id="GO:0002062">
    <property type="term" value="P:chondrocyte differentiation"/>
    <property type="evidence" value="ECO:0000270"/>
    <property type="project" value="RGD"/>
</dbReference>
<dbReference type="GO" id="GO:0035912">
    <property type="term" value="P:dorsal aorta morphogenesis"/>
    <property type="evidence" value="ECO:0000266"/>
    <property type="project" value="RGD"/>
</dbReference>
<dbReference type="GO" id="GO:0001554">
    <property type="term" value="P:luteolysis"/>
    <property type="evidence" value="ECO:0000270"/>
    <property type="project" value="RGD"/>
</dbReference>
<dbReference type="GO" id="GO:0043537">
    <property type="term" value="P:negative regulation of blood vessel endothelial cell migration"/>
    <property type="evidence" value="ECO:0000266"/>
    <property type="project" value="RGD"/>
</dbReference>
<dbReference type="GO" id="GO:1903588">
    <property type="term" value="P:negative regulation of blood vessel endothelial cell proliferation involved in sprouting angiogenesis"/>
    <property type="evidence" value="ECO:0000266"/>
    <property type="project" value="RGD"/>
</dbReference>
<dbReference type="GO" id="GO:0090051">
    <property type="term" value="P:negative regulation of cell migration involved in sprouting angiogenesis"/>
    <property type="evidence" value="ECO:0000266"/>
    <property type="project" value="RGD"/>
</dbReference>
<dbReference type="GO" id="GO:0008285">
    <property type="term" value="P:negative regulation of cell population proliferation"/>
    <property type="evidence" value="ECO:0000266"/>
    <property type="project" value="RGD"/>
</dbReference>
<dbReference type="GO" id="GO:0010596">
    <property type="term" value="P:negative regulation of endothelial cell migration"/>
    <property type="evidence" value="ECO:0000266"/>
    <property type="project" value="RGD"/>
</dbReference>
<dbReference type="GO" id="GO:0010629">
    <property type="term" value="P:negative regulation of gene expression"/>
    <property type="evidence" value="ECO:0000266"/>
    <property type="project" value="RGD"/>
</dbReference>
<dbReference type="GO" id="GO:0045746">
    <property type="term" value="P:negative regulation of Notch signaling pathway"/>
    <property type="evidence" value="ECO:0000266"/>
    <property type="project" value="RGD"/>
</dbReference>
<dbReference type="GO" id="GO:0000122">
    <property type="term" value="P:negative regulation of transcription by RNA polymerase II"/>
    <property type="evidence" value="ECO:0000266"/>
    <property type="project" value="RGD"/>
</dbReference>
<dbReference type="GO" id="GO:0007219">
    <property type="term" value="P:Notch signaling pathway"/>
    <property type="evidence" value="ECO:0000266"/>
    <property type="project" value="RGD"/>
</dbReference>
<dbReference type="GO" id="GO:0003344">
    <property type="term" value="P:pericardium morphogenesis"/>
    <property type="evidence" value="ECO:0000266"/>
    <property type="project" value="RGD"/>
</dbReference>
<dbReference type="GO" id="GO:0010628">
    <property type="term" value="P:positive regulation of gene expression"/>
    <property type="evidence" value="ECO:0000266"/>
    <property type="project" value="RGD"/>
</dbReference>
<dbReference type="GO" id="GO:2000179">
    <property type="term" value="P:positive regulation of neural precursor cell proliferation"/>
    <property type="evidence" value="ECO:0000266"/>
    <property type="project" value="RGD"/>
</dbReference>
<dbReference type="GO" id="GO:0045747">
    <property type="term" value="P:positive regulation of Notch signaling pathway"/>
    <property type="evidence" value="ECO:0000266"/>
    <property type="project" value="RGD"/>
</dbReference>
<dbReference type="GO" id="GO:0061074">
    <property type="term" value="P:regulation of neural retina development"/>
    <property type="evidence" value="ECO:0000266"/>
    <property type="project" value="RGD"/>
</dbReference>
<dbReference type="GO" id="GO:0050767">
    <property type="term" value="P:regulation of neurogenesis"/>
    <property type="evidence" value="ECO:0000266"/>
    <property type="project" value="RGD"/>
</dbReference>
<dbReference type="GO" id="GO:0030217">
    <property type="term" value="P:T cell differentiation"/>
    <property type="evidence" value="ECO:0000266"/>
    <property type="project" value="RGD"/>
</dbReference>
<dbReference type="GO" id="GO:0060579">
    <property type="term" value="P:ventral spinal cord interneuron fate commitment"/>
    <property type="evidence" value="ECO:0000266"/>
    <property type="project" value="RGD"/>
</dbReference>
<dbReference type="GO" id="GO:0003222">
    <property type="term" value="P:ventricular trabecula myocardium morphogenesis"/>
    <property type="evidence" value="ECO:0000266"/>
    <property type="project" value="RGD"/>
</dbReference>
<dbReference type="CDD" id="cd00054">
    <property type="entry name" value="EGF_CA"/>
    <property type="match status" value="5"/>
</dbReference>
<dbReference type="FunFam" id="2.10.25.10:FF:000018">
    <property type="entry name" value="Delta-like 1"/>
    <property type="match status" value="1"/>
</dbReference>
<dbReference type="FunFam" id="2.10.25.10:FF:000012">
    <property type="entry name" value="Delta-like protein"/>
    <property type="match status" value="3"/>
</dbReference>
<dbReference type="FunFam" id="2.10.25.10:FF:000064">
    <property type="entry name" value="Delta-like protein"/>
    <property type="match status" value="1"/>
</dbReference>
<dbReference type="FunFam" id="2.10.25.10:FF:000398">
    <property type="entry name" value="Delta-like protein"/>
    <property type="match status" value="1"/>
</dbReference>
<dbReference type="FunFam" id="2.10.25.140:FF:000001">
    <property type="entry name" value="Delta-like protein"/>
    <property type="match status" value="1"/>
</dbReference>
<dbReference type="FunFam" id="2.60.40.3510:FF:000003">
    <property type="entry name" value="Delta-like protein"/>
    <property type="match status" value="1"/>
</dbReference>
<dbReference type="FunFam" id="2.10.25.10:FF:000347">
    <property type="entry name" value="delta-like protein 3"/>
    <property type="match status" value="1"/>
</dbReference>
<dbReference type="Gene3D" id="2.10.25.140">
    <property type="match status" value="1"/>
</dbReference>
<dbReference type="Gene3D" id="2.60.40.3510">
    <property type="match status" value="1"/>
</dbReference>
<dbReference type="Gene3D" id="2.10.25.10">
    <property type="entry name" value="Laminin"/>
    <property type="match status" value="7"/>
</dbReference>
<dbReference type="InterPro" id="IPR001774">
    <property type="entry name" value="DSL"/>
</dbReference>
<dbReference type="InterPro" id="IPR001881">
    <property type="entry name" value="EGF-like_Ca-bd_dom"/>
</dbReference>
<dbReference type="InterPro" id="IPR013032">
    <property type="entry name" value="EGF-like_CS"/>
</dbReference>
<dbReference type="InterPro" id="IPR000742">
    <property type="entry name" value="EGF-like_dom"/>
</dbReference>
<dbReference type="InterPro" id="IPR000152">
    <property type="entry name" value="EGF-type_Asp/Asn_hydroxyl_site"/>
</dbReference>
<dbReference type="InterPro" id="IPR009030">
    <property type="entry name" value="Growth_fac_rcpt_cys_sf"/>
</dbReference>
<dbReference type="InterPro" id="IPR051830">
    <property type="entry name" value="NOTCH_homolog"/>
</dbReference>
<dbReference type="InterPro" id="IPR011651">
    <property type="entry name" value="Notch_ligand_N"/>
</dbReference>
<dbReference type="PANTHER" id="PTHR24033:SF224">
    <property type="entry name" value="C-TYPE LECTIN"/>
    <property type="match status" value="1"/>
</dbReference>
<dbReference type="PANTHER" id="PTHR24033">
    <property type="entry name" value="EGF-LIKE DOMAIN-CONTAINING PROTEIN"/>
    <property type="match status" value="1"/>
</dbReference>
<dbReference type="Pfam" id="PF01414">
    <property type="entry name" value="DSL"/>
    <property type="match status" value="1"/>
</dbReference>
<dbReference type="Pfam" id="PF00008">
    <property type="entry name" value="EGF"/>
    <property type="match status" value="4"/>
</dbReference>
<dbReference type="Pfam" id="PF12661">
    <property type="entry name" value="hEGF"/>
    <property type="match status" value="1"/>
</dbReference>
<dbReference type="Pfam" id="PF21795">
    <property type="entry name" value="JAG1-like_EGF2"/>
    <property type="match status" value="1"/>
</dbReference>
<dbReference type="Pfam" id="PF07657">
    <property type="entry name" value="MNNL"/>
    <property type="match status" value="1"/>
</dbReference>
<dbReference type="PRINTS" id="PR00010">
    <property type="entry name" value="EGFBLOOD"/>
</dbReference>
<dbReference type="SMART" id="SM00051">
    <property type="entry name" value="DSL"/>
    <property type="match status" value="1"/>
</dbReference>
<dbReference type="SMART" id="SM00181">
    <property type="entry name" value="EGF"/>
    <property type="match status" value="9"/>
</dbReference>
<dbReference type="SMART" id="SM00179">
    <property type="entry name" value="EGF_CA"/>
    <property type="match status" value="6"/>
</dbReference>
<dbReference type="SUPFAM" id="SSF57196">
    <property type="entry name" value="EGF/Laminin"/>
    <property type="match status" value="2"/>
</dbReference>
<dbReference type="SUPFAM" id="SSF57184">
    <property type="entry name" value="Growth factor receptor domain"/>
    <property type="match status" value="1"/>
</dbReference>
<dbReference type="PROSITE" id="PS00010">
    <property type="entry name" value="ASX_HYDROXYL"/>
    <property type="match status" value="1"/>
</dbReference>
<dbReference type="PROSITE" id="PS51051">
    <property type="entry name" value="DSL"/>
    <property type="match status" value="1"/>
</dbReference>
<dbReference type="PROSITE" id="PS00022">
    <property type="entry name" value="EGF_1"/>
    <property type="match status" value="8"/>
</dbReference>
<dbReference type="PROSITE" id="PS01186">
    <property type="entry name" value="EGF_2"/>
    <property type="match status" value="7"/>
</dbReference>
<dbReference type="PROSITE" id="PS50026">
    <property type="entry name" value="EGF_3"/>
    <property type="match status" value="8"/>
</dbReference>
<name>DLL4_RAT</name>